<name>OBP22_AEDAE</name>
<proteinExistence type="evidence at protein level"/>
<keyword id="KW-0002">3D-structure</keyword>
<keyword id="KW-0085">Behavior</keyword>
<keyword id="KW-1015">Disulfide bond</keyword>
<keyword id="KW-0325">Glycoprotein</keyword>
<keyword id="KW-1185">Reference proteome</keyword>
<keyword id="KW-0964">Secreted</keyword>
<keyword id="KW-0732">Signal</keyword>
<organism evidence="10">
    <name type="scientific">Aedes aegypti</name>
    <name type="common">Yellowfever mosquito</name>
    <name type="synonym">Culex aegypti</name>
    <dbReference type="NCBI Taxonomy" id="7159"/>
    <lineage>
        <taxon>Eukaryota</taxon>
        <taxon>Metazoa</taxon>
        <taxon>Ecdysozoa</taxon>
        <taxon>Arthropoda</taxon>
        <taxon>Hexapoda</taxon>
        <taxon>Insecta</taxon>
        <taxon>Pterygota</taxon>
        <taxon>Neoptera</taxon>
        <taxon>Endopterygota</taxon>
        <taxon>Diptera</taxon>
        <taxon>Nematocera</taxon>
        <taxon>Culicoidea</taxon>
        <taxon>Culicidae</taxon>
        <taxon>Culicinae</taxon>
        <taxon>Aedini</taxon>
        <taxon>Aedes</taxon>
        <taxon>Stegomyia</taxon>
    </lineage>
</organism>
<sequence>MKVFIAVFALIAVAAAEFTVSTTEDLQRYRTECVSSLNIPADYVEKFKKWEFPEDDTTMCYIKCVFNKMQLFDDTEGPLVDNLVHQLAHGRDAEEVRTEVLKCVDKNTDNNACHWAFRGFKCFQKNNLSLIKASIKKD</sequence>
<protein>
    <recommendedName>
        <fullName evidence="6 7">Odorant-binding protein 22</fullName>
        <shortName evidence="7">AeOBP22</shortName>
        <shortName evidence="6">OBP22</shortName>
    </recommendedName>
</protein>
<dbReference type="EMBL" id="DQ440077">
    <property type="protein sequence ID" value="ABF18110.1"/>
    <property type="molecule type" value="mRNA"/>
</dbReference>
<dbReference type="RefSeq" id="XP_001651445.1">
    <property type="nucleotide sequence ID" value="XM_001651395.2"/>
</dbReference>
<dbReference type="PDB" id="6NBN">
    <property type="method" value="NMR"/>
    <property type="chains" value="A=17-138"/>
</dbReference>
<dbReference type="PDB" id="6OG0">
    <property type="method" value="X-ray"/>
    <property type="resolution" value="1.85 A"/>
    <property type="chains" value="A=17-138"/>
</dbReference>
<dbReference type="PDB" id="6OGH">
    <property type="method" value="X-ray"/>
    <property type="resolution" value="1.85 A"/>
    <property type="chains" value="A=17-138"/>
</dbReference>
<dbReference type="PDB" id="6OII">
    <property type="method" value="X-ray"/>
    <property type="resolution" value="1.85 A"/>
    <property type="chains" value="A/B=17-138"/>
</dbReference>
<dbReference type="PDB" id="6OMW">
    <property type="method" value="X-ray"/>
    <property type="resolution" value="2.10 A"/>
    <property type="chains" value="A/B/C/D/E/F/G/H/I=17-138"/>
</dbReference>
<dbReference type="PDB" id="6OPB">
    <property type="method" value="X-ray"/>
    <property type="resolution" value="2.00 A"/>
    <property type="chains" value="A/B/C/D/E/F/G/H/I=17-138"/>
</dbReference>
<dbReference type="PDB" id="6OTL">
    <property type="method" value="X-ray"/>
    <property type="resolution" value="2.59 A"/>
    <property type="chains" value="A=17-138"/>
</dbReference>
<dbReference type="PDB" id="6P2E">
    <property type="method" value="X-ray"/>
    <property type="resolution" value="1.90 A"/>
    <property type="chains" value="A=17-138"/>
</dbReference>
<dbReference type="PDBsum" id="6NBN"/>
<dbReference type="PDBsum" id="6OG0"/>
<dbReference type="PDBsum" id="6OGH"/>
<dbReference type="PDBsum" id="6OII"/>
<dbReference type="PDBsum" id="6OMW"/>
<dbReference type="PDBsum" id="6OPB"/>
<dbReference type="PDBsum" id="6OTL"/>
<dbReference type="PDBsum" id="6P2E"/>
<dbReference type="BMRB" id="Q1HRL7"/>
<dbReference type="SMR" id="Q1HRL7"/>
<dbReference type="FunCoup" id="Q1HRL7">
    <property type="interactions" value="2"/>
</dbReference>
<dbReference type="STRING" id="7159.Q1HRL7"/>
<dbReference type="PaxDb" id="7159-AAEL005772-PA"/>
<dbReference type="EnsemblMetazoa" id="AAEL005772-RA">
    <property type="protein sequence ID" value="AAEL005772-PA"/>
    <property type="gene ID" value="AAEL005772"/>
</dbReference>
<dbReference type="GeneID" id="5567053"/>
<dbReference type="KEGG" id="aag:5567053"/>
<dbReference type="VEuPathDB" id="VectorBase:AAEL005772"/>
<dbReference type="eggNOG" id="ENOG502TCT6">
    <property type="taxonomic scope" value="Eukaryota"/>
</dbReference>
<dbReference type="HOGENOM" id="CLU_144993_1_0_1"/>
<dbReference type="InParanoid" id="Q1HRL7"/>
<dbReference type="OMA" id="TWAYRGF"/>
<dbReference type="OrthoDB" id="5978988at2759"/>
<dbReference type="Proteomes" id="UP000008820">
    <property type="component" value="Chromosome 1"/>
</dbReference>
<dbReference type="GO" id="GO:0005615">
    <property type="term" value="C:extracellular space"/>
    <property type="evidence" value="ECO:0007669"/>
    <property type="project" value="TreeGrafter"/>
</dbReference>
<dbReference type="GO" id="GO:0008289">
    <property type="term" value="F:lipid binding"/>
    <property type="evidence" value="ECO:0000269"/>
    <property type="project" value="DisProt"/>
</dbReference>
<dbReference type="GO" id="GO:0005549">
    <property type="term" value="F:odorant binding"/>
    <property type="evidence" value="ECO:0007669"/>
    <property type="project" value="InterPro"/>
</dbReference>
<dbReference type="GO" id="GO:0007608">
    <property type="term" value="P:sensory perception of smell"/>
    <property type="evidence" value="ECO:0007669"/>
    <property type="project" value="TreeGrafter"/>
</dbReference>
<dbReference type="CDD" id="cd23992">
    <property type="entry name" value="PBP_GOBP"/>
    <property type="match status" value="1"/>
</dbReference>
<dbReference type="Gene3D" id="1.10.238.20">
    <property type="entry name" value="Pheromone/general odorant binding protein domain"/>
    <property type="match status" value="1"/>
</dbReference>
<dbReference type="InterPro" id="IPR006170">
    <property type="entry name" value="PBP/GOBP"/>
</dbReference>
<dbReference type="InterPro" id="IPR036728">
    <property type="entry name" value="PBP_GOBP_sf"/>
</dbReference>
<dbReference type="PANTHER" id="PTHR11857:SF46">
    <property type="entry name" value="GENERAL ODORANT-BINDING PROTEIN 99A-RELATED"/>
    <property type="match status" value="1"/>
</dbReference>
<dbReference type="PANTHER" id="PTHR11857">
    <property type="entry name" value="ODORANT BINDING PROTEIN-RELATED"/>
    <property type="match status" value="1"/>
</dbReference>
<dbReference type="Pfam" id="PF01395">
    <property type="entry name" value="PBP_GOBP"/>
    <property type="match status" value="1"/>
</dbReference>
<dbReference type="SMART" id="SM00708">
    <property type="entry name" value="PhBP"/>
    <property type="match status" value="1"/>
</dbReference>
<dbReference type="SUPFAM" id="SSF47565">
    <property type="entry name" value="Insect pheromone/odorant-binding proteins"/>
    <property type="match status" value="1"/>
</dbReference>
<comment type="function">
    <text evidence="3 4 5">Involved in modulation of blood-feeding behavior and capacity in female mosquitoes (PubMed:22479185, PubMed:34634943). Required for normal oviposition (PubMed:34634943). Required for normal fecundity and fertility of female and male mosquitoes (PubMed:34634943). Required for normal expression of VGA1 gene, which encodes the egg yolk protein vitellogenin-A1 (PubMed:34634943). Involved in regulation of spermatozoa development (PubMed:34634943). Required for normal female longevity when mosquitoes are maintained on regular sugar meal (PubMed:34634943). Binds long chain fatty acids (PubMed:32094450).</text>
</comment>
<comment type="function">
    <text evidence="5">(Microbial infection) Facilitates shedding of dengue virus type 2 particles into mosquito saliva (PubMed:34634943). Does not affect dengue virus type 2 replication or infection prevalence in midgut and salivary glands at 14 days after blood feeding (PubMed:34634943).</text>
</comment>
<comment type="function">
    <text evidence="5">(Microbial infection) Facilitates shedding of Zika virus particles into mosquito saliva (PubMed:34634943). Does not affect Zika virus replication or infection prevalence in midgut and salivary glands at 14 days after blood feeding (PubMed:34634943).</text>
</comment>
<comment type="subunit">
    <text evidence="4">Monomer in solution.</text>
</comment>
<comment type="subcellular location">
    <subcellularLocation>
        <location evidence="8">Secreted</location>
    </subcellularLocation>
</comment>
<comment type="tissue specificity">
    <text evidence="3 5">High-level expression in female mouth parts, particularly in the proboscis (at protein level) (PubMed:34634943). Moderate-level expression in female antenna (at protein level) (PubMed:34634943). Expressed in testis but not in the accessory gland or ejaculatory duct (at protein level) (PubMed:34634943). Expressed in spermathecae (at protein level) (PubMed:34634943). Female salivary gland (PubMed:22479185). Female chemosensory organs: antenna, palp and proboscis (PubMed:22479185). Not detected in midgut (PubMed:34634943).</text>
</comment>
<comment type="induction">
    <text evidence="3">(Microbial infection) Up-regulated in salivary glands following dengue virus type 2 infection.</text>
</comment>
<comment type="disruption phenotype">
    <text evidence="3">(Microbial infection) RNAi-mediated knockdown results in reduced probing propensity, measured as a percentage of mosquitoes that probed within the 400 second period (PubMed:22479185). Increased probing initiation time (PubMed:22479185).</text>
</comment>
<comment type="similarity">
    <text evidence="8">Belongs to the PBP/GOBP family.</text>
</comment>
<accession>Q1HRL7</accession>
<reference evidence="10" key="1">
    <citation type="journal article" date="2018" name="Nature">
        <title>Improved reference genome of Aedes aegypti informs arbovirus vector control.</title>
        <authorList>
            <person name="Matthews B.J."/>
            <person name="Dudchenko O."/>
            <person name="Kingan S.B."/>
            <person name="Koren S."/>
            <person name="Antoshechkin I."/>
            <person name="Crawford J.E."/>
            <person name="Glassford W.J."/>
            <person name="Herre M."/>
            <person name="Redmond S.N."/>
            <person name="Rose N.H."/>
            <person name="Weedall G.D."/>
            <person name="Wu Y."/>
            <person name="Batra S.S."/>
            <person name="Brito-Sierra C.A."/>
            <person name="Buckingham S.D."/>
            <person name="Campbell C.L."/>
            <person name="Chan S."/>
            <person name="Cox E."/>
            <person name="Evans B.R."/>
            <person name="Fansiri T."/>
            <person name="Filipovic I."/>
            <person name="Fontaine A."/>
            <person name="Gloria-Soria A."/>
            <person name="Hall R."/>
            <person name="Joardar V.S."/>
            <person name="Jones A.K."/>
            <person name="Kay R.G.G."/>
            <person name="Kodali V.K."/>
            <person name="Lee J."/>
            <person name="Lycett G.J."/>
            <person name="Mitchell S.N."/>
            <person name="Muehling J."/>
            <person name="Murphy M.R."/>
            <person name="Omer A.D."/>
            <person name="Partridge F.A."/>
            <person name="Peluso P."/>
            <person name="Aiden A.P."/>
            <person name="Ramasamy V."/>
            <person name="Rasic G."/>
            <person name="Roy S."/>
            <person name="Saavedra-Rodriguez K."/>
            <person name="Sharan S."/>
            <person name="Sharma A."/>
            <person name="Smith M.L."/>
            <person name="Turner J."/>
            <person name="Weakley A.M."/>
            <person name="Zhao Z."/>
            <person name="Akbari O.S."/>
            <person name="Black W.C. IV"/>
            <person name="Cao H."/>
            <person name="Darby A.C."/>
            <person name="Hill C.A."/>
            <person name="Johnston J.S."/>
            <person name="Murphy T.D."/>
            <person name="Raikhel A.S."/>
            <person name="Sattelle D.B."/>
            <person name="Sharakhov I.V."/>
            <person name="White B.J."/>
            <person name="Zhao L."/>
            <person name="Aiden E.L."/>
            <person name="Mann R.S."/>
            <person name="Lambrechts L."/>
            <person name="Powell J.R."/>
            <person name="Sharakhova M.V."/>
            <person name="Tu Z."/>
            <person name="Robertson H.M."/>
            <person name="McBride C.S."/>
            <person name="Hastie A.R."/>
            <person name="Korlach J."/>
            <person name="Neafsey D.E."/>
            <person name="Phillippy A.M."/>
            <person name="Vosshall L.B."/>
        </authorList>
    </citation>
    <scope>NUCLEOTIDE SEQUENCE [LARGE SCALE GENOMIC DNA]</scope>
    <source>
        <strain evidence="10">LVP_AGWG</strain>
    </source>
</reference>
<reference evidence="8" key="2">
    <citation type="journal article" date="2012" name="PLoS Pathog.">
        <title>Dengue virus infection of the Aedes aegypti salivary gland and chemosensory apparatus induces genes that modulate infection and blood-feeding behavior.</title>
        <authorList>
            <person name="Sim S."/>
            <person name="Ramirez J.L."/>
            <person name="Dimopoulos G."/>
        </authorList>
    </citation>
    <scope>FUNCTION</scope>
    <scope>TISSUE SPECIFICITY</scope>
    <scope>INDUCTION (MICROBIAL INFECTION)</scope>
    <scope>DISRUPTION PHENOTYPE (MICROBIAL INFECTION)</scope>
</reference>
<reference evidence="8" key="3">
    <citation type="journal article" date="2021" name="MBio">
        <title>Pleiotropic Odorant-Binding Proteins Promote Aedes aegypti Reproduction and Flavivirus Transmission.</title>
        <authorList>
            <person name="Dong S."/>
            <person name="Ye Z."/>
            <person name="Tikhe C.V."/>
            <person name="Tu Z.J."/>
            <person name="Zwiebel L.J."/>
            <person name="Dimopoulos G."/>
        </authorList>
    </citation>
    <scope>FUNCTION</scope>
    <scope>FUNCTION (MICROBIAL INFECTION)</scope>
    <scope>TISSUE SPECIFICITY</scope>
</reference>
<reference evidence="9 11 12 13 14 15 16 18" key="4">
    <citation type="journal article" date="2020" name="Sci. Rep.">
        <title>Aedes aegypti Odorant Binding Protein 22 selectively binds fatty acids through a conformational change in its C-terminal tail.</title>
        <authorList>
            <person name="Wang J."/>
            <person name="Murphy E.J."/>
            <person name="Nix J.C."/>
            <person name="Jones D.N.M."/>
        </authorList>
    </citation>
    <scope>STRUCTURE BY NMR OF 17-138 IN COMPLEX WITH ARACHIDONIC ACID</scope>
    <scope>X-RAY CRYSTALLOGRAPHY (1.85 ANGSTROMS) OF 17-138 IN COMPLEX WITH ARACHIDONIC ACID; PALMITOLEIC ACID; ICOSANOIC ACID AND LINOLEIC ACID</scope>
    <scope>FUNCTION</scope>
    <scope>SUBUNIT</scope>
    <scope>DISULFIDE BONDS</scope>
</reference>
<evidence type="ECO:0000255" key="1"/>
<evidence type="ECO:0000255" key="2">
    <source>
        <dbReference type="PROSITE-ProRule" id="PRU00498"/>
    </source>
</evidence>
<evidence type="ECO:0000269" key="3">
    <source>
    </source>
</evidence>
<evidence type="ECO:0000269" key="4">
    <source>
    </source>
</evidence>
<evidence type="ECO:0000269" key="5">
    <source>
    </source>
</evidence>
<evidence type="ECO:0000303" key="6">
    <source>
    </source>
</evidence>
<evidence type="ECO:0000303" key="7">
    <source>
    </source>
</evidence>
<evidence type="ECO:0000305" key="8"/>
<evidence type="ECO:0000312" key="9">
    <source>
        <dbReference type="PDB" id="6OTL"/>
    </source>
</evidence>
<evidence type="ECO:0000312" key="10">
    <source>
        <dbReference type="Proteomes" id="UP000008820"/>
    </source>
</evidence>
<evidence type="ECO:0007744" key="11">
    <source>
        <dbReference type="PDB" id="6NBN"/>
    </source>
</evidence>
<evidence type="ECO:0007744" key="12">
    <source>
        <dbReference type="PDB" id="6OG0"/>
    </source>
</evidence>
<evidence type="ECO:0007744" key="13">
    <source>
        <dbReference type="PDB" id="6OGH"/>
    </source>
</evidence>
<evidence type="ECO:0007744" key="14">
    <source>
        <dbReference type="PDB" id="6OII"/>
    </source>
</evidence>
<evidence type="ECO:0007744" key="15">
    <source>
        <dbReference type="PDB" id="6OMW"/>
    </source>
</evidence>
<evidence type="ECO:0007744" key="16">
    <source>
        <dbReference type="PDB" id="6OPB"/>
    </source>
</evidence>
<evidence type="ECO:0007744" key="17">
    <source>
        <dbReference type="PDB" id="6OTL"/>
    </source>
</evidence>
<evidence type="ECO:0007744" key="18">
    <source>
        <dbReference type="PDB" id="6P2E"/>
    </source>
</evidence>
<evidence type="ECO:0007829" key="19">
    <source>
        <dbReference type="PDB" id="6OG0"/>
    </source>
</evidence>
<evidence type="ECO:0007829" key="20">
    <source>
        <dbReference type="PDB" id="6OMW"/>
    </source>
</evidence>
<feature type="signal peptide" evidence="1">
    <location>
        <begin position="1"/>
        <end position="16"/>
    </location>
</feature>
<feature type="chain" id="PRO_5014308347" description="Odorant-binding protein 22" evidence="1">
    <location>
        <begin position="17"/>
        <end position="138"/>
    </location>
</feature>
<feature type="binding site" evidence="4 11 14">
    <location>
        <position position="30"/>
    </location>
    <ligand>
        <name>(5Z,8Z,11Z,14Z)-eicosatetraenoate</name>
        <dbReference type="ChEBI" id="CHEBI:32395"/>
    </ligand>
</feature>
<feature type="binding site" evidence="4 15">
    <location>
        <position position="30"/>
    </location>
    <ligand>
        <name>(9Z)-hexadecenoate</name>
        <dbReference type="ChEBI" id="CHEBI:32372"/>
    </ligand>
</feature>
<feature type="binding site" evidence="4 13">
    <location>
        <position position="30"/>
    </location>
    <ligand>
        <name>(9Z,12Z)-octadecadienoate</name>
        <dbReference type="ChEBI" id="CHEBI:30245"/>
    </ligand>
</feature>
<feature type="binding site" evidence="4 15">
    <location>
        <position position="61"/>
    </location>
    <ligand>
        <name>(9Z)-hexadecenoate</name>
        <dbReference type="ChEBI" id="CHEBI:32372"/>
    </ligand>
</feature>
<feature type="binding site" evidence="4 13">
    <location>
        <position position="61"/>
    </location>
    <ligand>
        <name>(9Z,12Z)-octadecadienoate</name>
        <dbReference type="ChEBI" id="CHEBI:30245"/>
    </ligand>
</feature>
<feature type="glycosylation site" description="N-linked (GlcNAc...) asparagine" evidence="2">
    <location>
        <position position="127"/>
    </location>
</feature>
<feature type="disulfide bond" evidence="4 11 12 13 14 15 16 17 18">
    <location>
        <begin position="33"/>
        <end position="64"/>
    </location>
</feature>
<feature type="disulfide bond" evidence="4 11 12 13 14 15 16 17 18">
    <location>
        <begin position="60"/>
        <end position="113"/>
    </location>
</feature>
<feature type="disulfide bond" evidence="4 11 12 13 14 15 16 17 18">
    <location>
        <begin position="103"/>
        <end position="122"/>
    </location>
</feature>
<feature type="helix" evidence="19">
    <location>
        <begin position="23"/>
        <end position="36"/>
    </location>
</feature>
<feature type="helix" evidence="19">
    <location>
        <begin position="41"/>
        <end position="48"/>
    </location>
</feature>
<feature type="strand" evidence="20">
    <location>
        <begin position="51"/>
        <end position="55"/>
    </location>
</feature>
<feature type="helix" evidence="19">
    <location>
        <begin position="56"/>
        <end position="68"/>
    </location>
</feature>
<feature type="strand" evidence="19">
    <location>
        <begin position="71"/>
        <end position="73"/>
    </location>
</feature>
<feature type="turn" evidence="19">
    <location>
        <begin position="74"/>
        <end position="76"/>
    </location>
</feature>
<feature type="helix" evidence="19">
    <location>
        <begin position="80"/>
        <end position="87"/>
    </location>
</feature>
<feature type="strand" evidence="19">
    <location>
        <begin position="89"/>
        <end position="91"/>
    </location>
</feature>
<feature type="helix" evidence="19">
    <location>
        <begin position="93"/>
        <end position="103"/>
    </location>
</feature>
<feature type="helix" evidence="19">
    <location>
        <begin position="112"/>
        <end position="125"/>
    </location>
</feature>
<feature type="strand" evidence="20">
    <location>
        <begin position="134"/>
        <end position="136"/>
    </location>
</feature>